<organism>
    <name type="scientific">Rattus norvegicus</name>
    <name type="common">Rat</name>
    <dbReference type="NCBI Taxonomy" id="10116"/>
    <lineage>
        <taxon>Eukaryota</taxon>
        <taxon>Metazoa</taxon>
        <taxon>Chordata</taxon>
        <taxon>Craniata</taxon>
        <taxon>Vertebrata</taxon>
        <taxon>Euteleostomi</taxon>
        <taxon>Mammalia</taxon>
        <taxon>Eutheria</taxon>
        <taxon>Euarchontoglires</taxon>
        <taxon>Glires</taxon>
        <taxon>Rodentia</taxon>
        <taxon>Myomorpha</taxon>
        <taxon>Muroidea</taxon>
        <taxon>Muridae</taxon>
        <taxon>Murinae</taxon>
        <taxon>Rattus</taxon>
    </lineage>
</organism>
<protein>
    <recommendedName>
        <fullName evidence="4">Small ribosomal subunit protein eS25</fullName>
    </recommendedName>
    <alternativeName>
        <fullName>40S ribosomal protein S25</fullName>
    </alternativeName>
</protein>
<sequence>MPPKDDKKKKDAGKSAKKDKDPVNKSGGKAKKKKWSKGKVRDKLNNLVLFDKATYDKLCKEVPNYKLITPAVVSERLKIRGSLARAALQELLSKGLIKLVSKHRAQVIYTRNTKGGDAPAAGEDA</sequence>
<keyword id="KW-0007">Acetylation</keyword>
<keyword id="KW-0963">Cytoplasm</keyword>
<keyword id="KW-1185">Reference proteome</keyword>
<keyword id="KW-0687">Ribonucleoprotein</keyword>
<keyword id="KW-0689">Ribosomal protein</keyword>
<feature type="chain" id="PRO_0000192871" description="Small ribosomal subunit protein eS25">
    <location>
        <begin position="1"/>
        <end position="125"/>
    </location>
</feature>
<feature type="region of interest" description="Disordered" evidence="3">
    <location>
        <begin position="1"/>
        <end position="38"/>
    </location>
</feature>
<feature type="compositionally biased region" description="Basic and acidic residues" evidence="3">
    <location>
        <begin position="1"/>
        <end position="23"/>
    </location>
</feature>
<feature type="compositionally biased region" description="Basic residues" evidence="3">
    <location>
        <begin position="28"/>
        <end position="38"/>
    </location>
</feature>
<feature type="modified residue" description="N6-acetyllysine" evidence="2">
    <location>
        <position position="43"/>
    </location>
</feature>
<feature type="modified residue" description="N6-acetyllysine; alternate" evidence="1">
    <location>
        <position position="52"/>
    </location>
</feature>
<feature type="modified residue" description="N6-succinyllysine; alternate" evidence="2">
    <location>
        <position position="52"/>
    </location>
</feature>
<feature type="modified residue" description="N6-acetyllysine" evidence="1">
    <location>
        <position position="60"/>
    </location>
</feature>
<feature type="modified residue" description="N6-acetyllysine" evidence="1">
    <location>
        <position position="66"/>
    </location>
</feature>
<feature type="modified residue" description="N6-acetyllysine; alternate" evidence="1">
    <location>
        <position position="94"/>
    </location>
</feature>
<feature type="modified residue" description="N6-succinyllysine; alternate" evidence="2">
    <location>
        <position position="94"/>
    </location>
</feature>
<evidence type="ECO:0000250" key="1">
    <source>
        <dbReference type="UniProtKB" id="P62851"/>
    </source>
</evidence>
<evidence type="ECO:0000250" key="2">
    <source>
        <dbReference type="UniProtKB" id="P62852"/>
    </source>
</evidence>
<evidence type="ECO:0000256" key="3">
    <source>
        <dbReference type="SAM" id="MobiDB-lite"/>
    </source>
</evidence>
<evidence type="ECO:0000305" key="4"/>
<accession>P62853</accession>
<accession>P25111</accession>
<accession>Q3SYP7</accession>
<proteinExistence type="evidence at transcript level"/>
<reference key="1">
    <citation type="journal article" date="1992" name="Biochem. Biophys. Res. Commun.">
        <title>The primary structure of rat ribosomal protein S25.</title>
        <authorList>
            <person name="Chan Y.-L."/>
            <person name="Wool I.G."/>
        </authorList>
    </citation>
    <scope>NUCLEOTIDE SEQUENCE [GENOMIC DNA]</scope>
    <source>
        <strain>Sprague-Dawley</strain>
        <tissue>Liver</tissue>
    </source>
</reference>
<reference key="2">
    <citation type="journal article" date="2004" name="Genome Res.">
        <title>The status, quality, and expansion of the NIH full-length cDNA project: the Mammalian Gene Collection (MGC).</title>
        <authorList>
            <consortium name="The MGC Project Team"/>
        </authorList>
    </citation>
    <scope>NUCLEOTIDE SEQUENCE [LARGE SCALE MRNA]</scope>
    <source>
        <tissue>Placenta</tissue>
    </source>
</reference>
<comment type="function">
    <text evidence="1">Component of the small ribosomal subunit. The ribosome is a large ribonucleoprotein complex responsible for the synthesis of proteins in the cell.</text>
</comment>
<comment type="subunit">
    <text evidence="1">Component of the small ribosomal subunit.</text>
</comment>
<comment type="subcellular location">
    <subcellularLocation>
        <location evidence="1">Cytoplasm</location>
    </subcellularLocation>
</comment>
<comment type="similarity">
    <text evidence="4">Belongs to the eukaryotic ribosomal protein eS25 family.</text>
</comment>
<name>RS25_RAT</name>
<gene>
    <name type="primary">Rps25</name>
</gene>
<dbReference type="EMBL" id="X62482">
    <property type="protein sequence ID" value="CAA44349.1"/>
    <property type="molecule type" value="Genomic_DNA"/>
</dbReference>
<dbReference type="EMBL" id="BC103658">
    <property type="protein sequence ID" value="AAI03659.1"/>
    <property type="molecule type" value="mRNA"/>
</dbReference>
<dbReference type="PIR" id="A38969">
    <property type="entry name" value="R3RT25"/>
</dbReference>
<dbReference type="RefSeq" id="NP_001005528.1">
    <property type="nucleotide sequence ID" value="NM_001005528.2"/>
</dbReference>
<dbReference type="SMR" id="P62853"/>
<dbReference type="BioGRID" id="250779">
    <property type="interactions" value="6"/>
</dbReference>
<dbReference type="FunCoup" id="P62853">
    <property type="interactions" value="2575"/>
</dbReference>
<dbReference type="IntAct" id="P62853">
    <property type="interactions" value="5"/>
</dbReference>
<dbReference type="MINT" id="P62853"/>
<dbReference type="STRING" id="10116.ENSRNOP00000033144"/>
<dbReference type="iPTMnet" id="P62853"/>
<dbReference type="PhosphoSitePlus" id="P62853"/>
<dbReference type="jPOST" id="P62853"/>
<dbReference type="PaxDb" id="10116-ENSRNOP00000033144"/>
<dbReference type="GeneID" id="122799"/>
<dbReference type="KEGG" id="rno:122799"/>
<dbReference type="UCSC" id="RGD:621043">
    <property type="organism name" value="rat"/>
</dbReference>
<dbReference type="AGR" id="RGD:621043"/>
<dbReference type="CTD" id="6230"/>
<dbReference type="RGD" id="621043">
    <property type="gene designation" value="Rps25"/>
</dbReference>
<dbReference type="eggNOG" id="KOG1767">
    <property type="taxonomic scope" value="Eukaryota"/>
</dbReference>
<dbReference type="HOGENOM" id="CLU_129470_0_1_1"/>
<dbReference type="InParanoid" id="P62853"/>
<dbReference type="OrthoDB" id="9580478at2759"/>
<dbReference type="PhylomeDB" id="P62853"/>
<dbReference type="TreeFam" id="TF314909"/>
<dbReference type="Reactome" id="R-RNO-156827">
    <property type="pathway name" value="L13a-mediated translational silencing of Ceruloplasmin expression"/>
</dbReference>
<dbReference type="Reactome" id="R-RNO-1799339">
    <property type="pathway name" value="SRP-dependent cotranslational protein targeting to membrane"/>
</dbReference>
<dbReference type="Reactome" id="R-RNO-6791226">
    <property type="pathway name" value="Major pathway of rRNA processing in the nucleolus and cytosol"/>
</dbReference>
<dbReference type="Reactome" id="R-RNO-72649">
    <property type="pathway name" value="Translation initiation complex formation"/>
</dbReference>
<dbReference type="Reactome" id="R-RNO-72689">
    <property type="pathway name" value="Formation of a pool of free 40S subunits"/>
</dbReference>
<dbReference type="Reactome" id="R-RNO-72695">
    <property type="pathway name" value="Formation of the ternary complex, and subsequently, the 43S complex"/>
</dbReference>
<dbReference type="Reactome" id="R-RNO-72702">
    <property type="pathway name" value="Ribosomal scanning and start codon recognition"/>
</dbReference>
<dbReference type="Reactome" id="R-RNO-72706">
    <property type="pathway name" value="GTP hydrolysis and joining of the 60S ribosomal subunit"/>
</dbReference>
<dbReference type="Reactome" id="R-RNO-975956">
    <property type="pathway name" value="Nonsense Mediated Decay (NMD) independent of the Exon Junction Complex (EJC)"/>
</dbReference>
<dbReference type="Reactome" id="R-RNO-975957">
    <property type="pathway name" value="Nonsense Mediated Decay (NMD) enhanced by the Exon Junction Complex (EJC)"/>
</dbReference>
<dbReference type="PRO" id="PR:P62853"/>
<dbReference type="Proteomes" id="UP000002494">
    <property type="component" value="Unplaced"/>
</dbReference>
<dbReference type="GO" id="GO:0022626">
    <property type="term" value="C:cytosolic ribosome"/>
    <property type="evidence" value="ECO:0000266"/>
    <property type="project" value="RGD"/>
</dbReference>
<dbReference type="GO" id="GO:0022627">
    <property type="term" value="C:cytosolic small ribosomal subunit"/>
    <property type="evidence" value="ECO:0000314"/>
    <property type="project" value="RGD"/>
</dbReference>
<dbReference type="GO" id="GO:0005730">
    <property type="term" value="C:nucleolus"/>
    <property type="evidence" value="ECO:0000266"/>
    <property type="project" value="RGD"/>
</dbReference>
<dbReference type="GO" id="GO:0005634">
    <property type="term" value="C:nucleus"/>
    <property type="evidence" value="ECO:0000266"/>
    <property type="project" value="RGD"/>
</dbReference>
<dbReference type="GO" id="GO:0014069">
    <property type="term" value="C:postsynaptic density"/>
    <property type="evidence" value="ECO:0000266"/>
    <property type="project" value="RGD"/>
</dbReference>
<dbReference type="GO" id="GO:0005840">
    <property type="term" value="C:ribosome"/>
    <property type="evidence" value="ECO:0000266"/>
    <property type="project" value="RGD"/>
</dbReference>
<dbReference type="GO" id="GO:0045202">
    <property type="term" value="C:synapse"/>
    <property type="evidence" value="ECO:0000266"/>
    <property type="project" value="RGD"/>
</dbReference>
<dbReference type="GO" id="GO:0003735">
    <property type="term" value="F:structural constituent of ribosome"/>
    <property type="evidence" value="ECO:0000315"/>
    <property type="project" value="RGD"/>
</dbReference>
<dbReference type="GO" id="GO:0034198">
    <property type="term" value="P:cellular response to amino acid starvation"/>
    <property type="evidence" value="ECO:0000270"/>
    <property type="project" value="RGD"/>
</dbReference>
<dbReference type="GO" id="GO:0000028">
    <property type="term" value="P:ribosomal small subunit assembly"/>
    <property type="evidence" value="ECO:0000315"/>
    <property type="project" value="RGD"/>
</dbReference>
<dbReference type="GO" id="GO:0042274">
    <property type="term" value="P:ribosomal small subunit biogenesis"/>
    <property type="evidence" value="ECO:0000266"/>
    <property type="project" value="RGD"/>
</dbReference>
<dbReference type="GO" id="GO:0006364">
    <property type="term" value="P:rRNA processing"/>
    <property type="evidence" value="ECO:0000266"/>
    <property type="project" value="RGD"/>
</dbReference>
<dbReference type="FunFam" id="1.10.10.10:FF:000166">
    <property type="entry name" value="40S ribosomal protein S25"/>
    <property type="match status" value="1"/>
</dbReference>
<dbReference type="Gene3D" id="1.10.10.10">
    <property type="entry name" value="Winged helix-like DNA-binding domain superfamily/Winged helix DNA-binding domain"/>
    <property type="match status" value="1"/>
</dbReference>
<dbReference type="InterPro" id="IPR004977">
    <property type="entry name" value="Ribosomal_eS25"/>
</dbReference>
<dbReference type="InterPro" id="IPR036388">
    <property type="entry name" value="WH-like_DNA-bd_sf"/>
</dbReference>
<dbReference type="PANTHER" id="PTHR12850">
    <property type="entry name" value="40S RIBOSOMAL PROTEIN S25"/>
    <property type="match status" value="1"/>
</dbReference>
<dbReference type="Pfam" id="PF03297">
    <property type="entry name" value="Ribosomal_S25"/>
    <property type="match status" value="1"/>
</dbReference>